<organism>
    <name type="scientific">Aquifex aeolicus (strain VF5)</name>
    <dbReference type="NCBI Taxonomy" id="224324"/>
    <lineage>
        <taxon>Bacteria</taxon>
        <taxon>Pseudomonadati</taxon>
        <taxon>Aquificota</taxon>
        <taxon>Aquificia</taxon>
        <taxon>Aquificales</taxon>
        <taxon>Aquificaceae</taxon>
        <taxon>Aquifex</taxon>
    </lineage>
</organism>
<keyword id="KW-0021">Allosteric enzyme</keyword>
<keyword id="KW-0119">Carbohydrate metabolism</keyword>
<keyword id="KW-0321">Glycogen metabolism</keyword>
<keyword id="KW-0328">Glycosyltransferase</keyword>
<keyword id="KW-0663">Pyridoxal phosphate</keyword>
<keyword id="KW-1185">Reference proteome</keyword>
<keyword id="KW-0808">Transferase</keyword>
<dbReference type="EC" id="2.4.1.1"/>
<dbReference type="EMBL" id="AE000657">
    <property type="protein sequence ID" value="AAC06896.1"/>
    <property type="molecule type" value="Genomic_DNA"/>
</dbReference>
<dbReference type="PIR" id="H70362">
    <property type="entry name" value="H70362"/>
</dbReference>
<dbReference type="RefSeq" id="NP_213492.1">
    <property type="nucleotide sequence ID" value="NC_000918.1"/>
</dbReference>
<dbReference type="RefSeq" id="WP_010880430.1">
    <property type="nucleotide sequence ID" value="NC_000918.1"/>
</dbReference>
<dbReference type="SMR" id="O66932"/>
<dbReference type="FunCoup" id="O66932">
    <property type="interactions" value="427"/>
</dbReference>
<dbReference type="STRING" id="224324.aq_717"/>
<dbReference type="CAZy" id="GT35">
    <property type="family name" value="Glycosyltransferase Family 35"/>
</dbReference>
<dbReference type="EnsemblBacteria" id="AAC06896">
    <property type="protein sequence ID" value="AAC06896"/>
    <property type="gene ID" value="aq_717"/>
</dbReference>
<dbReference type="KEGG" id="aae:aq_717"/>
<dbReference type="PATRIC" id="fig|224324.8.peg.575"/>
<dbReference type="eggNOG" id="COG0058">
    <property type="taxonomic scope" value="Bacteria"/>
</dbReference>
<dbReference type="HOGENOM" id="CLU_015112_0_0_0"/>
<dbReference type="InParanoid" id="O66932"/>
<dbReference type="OrthoDB" id="9760804at2"/>
<dbReference type="BRENDA" id="2.4.1.1">
    <property type="organism ID" value="396"/>
</dbReference>
<dbReference type="Proteomes" id="UP000000798">
    <property type="component" value="Chromosome"/>
</dbReference>
<dbReference type="GO" id="GO:0008184">
    <property type="term" value="F:glycogen phosphorylase activity"/>
    <property type="evidence" value="ECO:0007669"/>
    <property type="project" value="InterPro"/>
</dbReference>
<dbReference type="GO" id="GO:0030170">
    <property type="term" value="F:pyridoxal phosphate binding"/>
    <property type="evidence" value="ECO:0007669"/>
    <property type="project" value="InterPro"/>
</dbReference>
<dbReference type="GO" id="GO:0005977">
    <property type="term" value="P:glycogen metabolic process"/>
    <property type="evidence" value="ECO:0007669"/>
    <property type="project" value="UniProtKB-KW"/>
</dbReference>
<dbReference type="Gene3D" id="3.40.50.2000">
    <property type="entry name" value="Glycogen Phosphorylase B"/>
    <property type="match status" value="3"/>
</dbReference>
<dbReference type="InterPro" id="IPR011834">
    <property type="entry name" value="Agluc_phsphrylas"/>
</dbReference>
<dbReference type="InterPro" id="IPR000811">
    <property type="entry name" value="Glyco_trans_35"/>
</dbReference>
<dbReference type="InterPro" id="IPR052182">
    <property type="entry name" value="Glycogen/Maltodextrin_Phosph"/>
</dbReference>
<dbReference type="InterPro" id="IPR024517">
    <property type="entry name" value="Glycogen_phosphorylase_DUF3417"/>
</dbReference>
<dbReference type="InterPro" id="IPR035090">
    <property type="entry name" value="Pyridoxal_P_attach_site"/>
</dbReference>
<dbReference type="NCBIfam" id="TIGR02094">
    <property type="entry name" value="more_P_ylases"/>
    <property type="match status" value="1"/>
</dbReference>
<dbReference type="PANTHER" id="PTHR42655">
    <property type="entry name" value="GLYCOGEN PHOSPHORYLASE"/>
    <property type="match status" value="1"/>
</dbReference>
<dbReference type="PANTHER" id="PTHR42655:SF1">
    <property type="entry name" value="GLYCOGEN PHOSPHORYLASE"/>
    <property type="match status" value="1"/>
</dbReference>
<dbReference type="Pfam" id="PF11897">
    <property type="entry name" value="DUF3417"/>
    <property type="match status" value="1"/>
</dbReference>
<dbReference type="Pfam" id="PF00343">
    <property type="entry name" value="Phosphorylase"/>
    <property type="match status" value="1"/>
</dbReference>
<dbReference type="PIRSF" id="PIRSF000460">
    <property type="entry name" value="Pprylas_GlgP"/>
    <property type="match status" value="1"/>
</dbReference>
<dbReference type="SUPFAM" id="SSF53756">
    <property type="entry name" value="UDP-Glycosyltransferase/glycogen phosphorylase"/>
    <property type="match status" value="1"/>
</dbReference>
<dbReference type="PROSITE" id="PS00102">
    <property type="entry name" value="PHOSPHORYLASE"/>
    <property type="match status" value="1"/>
</dbReference>
<accession>O66932</accession>
<reference key="1">
    <citation type="journal article" date="1998" name="Nature">
        <title>The complete genome of the hyperthermophilic bacterium Aquifex aeolicus.</title>
        <authorList>
            <person name="Deckert G."/>
            <person name="Warren P.V."/>
            <person name="Gaasterland T."/>
            <person name="Young W.G."/>
            <person name="Lenox A.L."/>
            <person name="Graham D.E."/>
            <person name="Overbeek R."/>
            <person name="Snead M.A."/>
            <person name="Keller M."/>
            <person name="Aujay M."/>
            <person name="Huber R."/>
            <person name="Feldman R.A."/>
            <person name="Short J.M."/>
            <person name="Olsen G.J."/>
            <person name="Swanson R.V."/>
        </authorList>
    </citation>
    <scope>NUCLEOTIDE SEQUENCE [LARGE SCALE GENOMIC DNA]</scope>
    <source>
        <strain>VF5</strain>
    </source>
</reference>
<proteinExistence type="inferred from homology"/>
<protein>
    <recommendedName>
        <fullName>Glycogen phosphorylase</fullName>
        <ecNumber>2.4.1.1</ecNumber>
    </recommendedName>
</protein>
<feature type="chain" id="PRO_0000188548" description="Glycogen phosphorylase">
    <location>
        <begin position="1"/>
        <end position="692"/>
    </location>
</feature>
<feature type="modified residue" description="N6-(pyridoxal phosphate)lysine" evidence="1">
    <location>
        <position position="586"/>
    </location>
</feature>
<comment type="function">
    <text evidence="1">Phosphorylase is an important allosteric enzyme in carbohydrate metabolism. Enzymes from different sources differ in their regulatory mechanisms and in their natural substrates. However, all known phosphorylases share catalytic and structural properties (By similarity).</text>
</comment>
<comment type="catalytic activity">
    <reaction>
        <text>[(1-&gt;4)-alpha-D-glucosyl](n) + phosphate = [(1-&gt;4)-alpha-D-glucosyl](n-1) + alpha-D-glucose 1-phosphate</text>
        <dbReference type="Rhea" id="RHEA:41732"/>
        <dbReference type="Rhea" id="RHEA-COMP:9584"/>
        <dbReference type="Rhea" id="RHEA-COMP:9586"/>
        <dbReference type="ChEBI" id="CHEBI:15444"/>
        <dbReference type="ChEBI" id="CHEBI:43474"/>
        <dbReference type="ChEBI" id="CHEBI:58601"/>
        <dbReference type="EC" id="2.4.1.1"/>
    </reaction>
</comment>
<comment type="cofactor">
    <cofactor evidence="1">
        <name>pyridoxal 5'-phosphate</name>
        <dbReference type="ChEBI" id="CHEBI:597326"/>
    </cofactor>
</comment>
<comment type="similarity">
    <text evidence="2">Belongs to the glycogen phosphorylase family.</text>
</comment>
<evidence type="ECO:0000250" key="1"/>
<evidence type="ECO:0000305" key="2"/>
<sequence length="692" mass="81158">MEEEKVKEGLWELAYNLWWTWNPPAKELFRSIDPLLWKETKENPIELLRKTKLLENKLKDEDFISHFKYVYSLYKTYMNRHSKYEDTYKKPIVFLSPEYGLHHTLLIYAGGLGFLAGDILKESSDLGFPLIGVGFMYPQGYVKQRIRVDGWQEDLDAQNQKELMPVKKVLDKEGKWLKCYVYVRDEKVYFGVWEVNVGKTKLYLLDTNVEENTPWNREISSRLYVPDKDLRLRQQIVLGFGTVILLEKLGIDAGGFHINEDYPSFVFLAEIFKLLKKGLTWDKAIEEVRKISLFTTHTPLRVAVNTYPFHMIEEQFLFVKDVYGIDVKKVLELGTNPEDPSEGFNSTIMSLRLAKYVNAVSKRHQEVSSKMWSFLFKEKENPIDYVTNGVHFPTWICSDLRRLYEEYLGENFVELHDHKSLWELIRDIPDEELWEYHIRNKERLIEHIKDRARERWVKEKADPSILMAEGLFLDSDVLTVGFARRMTGYKRPDLIFTDVERLKKIVNDSERPVQIIFAGKAHPADIEGKKIIQRIFNFAKDPEFGGRIAFVEDYDELLAHYMVRGVDVWLNNPLPPLEACGTSGMKASMNGVLHLSILDGWWIEGYNGKNGWAFGDYEVEGDRNRADAEAIYNILENEVIPLYYERDERGVPVKWISMMKEAIKSITPNFCSRRMLKDYINKFYSKILKEEG</sequence>
<gene>
    <name type="primary">glgP</name>
    <name type="ordered locus">aq_717</name>
</gene>
<name>PHSG_AQUAE</name>